<keyword id="KW-0460">Magnesium</keyword>
<keyword id="KW-0464">Manganese</keyword>
<keyword id="KW-0474">Menaquinone biosynthesis</keyword>
<keyword id="KW-0479">Metal-binding</keyword>
<keyword id="KW-1185">Reference proteome</keyword>
<keyword id="KW-0786">Thiamine pyrophosphate</keyword>
<keyword id="KW-0808">Transferase</keyword>
<sequence length="567" mass="61598">MQIEKTAELNLLWGSLILEELARLEVQHVCMAPGSRSTPLTLAAAKQTKLKQHLHFDERGLGFLALGLAKASRAPVAIITTSGTAVANLYPAIVEAWLTQVPLIVLSGDRPPELLGCGANQAIVQPAIFADYAKQVNLPTPDMAIPPQALLTLLDESVANAKGPIHVNCMYREPLYPGSMSADFTHYLSPLGNWQHSALPYNQFADAQLVSAPTSDALARFVHGKGVIIAGTLAPEQQPEQLIELAQKLGWPLLTDAQSQLRQHGAAIGNIDQLLLQPKAKALLQEADTVLVFGGRLLSKRLISYLSEQKWKRYWQVLPQQTRLDPSHSAKQVWISPLAAFAQLPWPRSSEANWALQLIEANEQLATLFQQQIDDAEFGEAQVVRTIAGRGEQQLFIGNSLPVRLYDMYAPITPIAPRVFTNRGASGIDGLLATACGIAAHKASSTTLVIGDLSQLHDLNSLALAAKQQGTLVIVILNNDGGNIFNLLPVPDEKLRSGYYRLAHGLEFGYGAAMFGLPYNRVEDIVSFNEAYDDALAYPGASVIEVCVAQDQASEQIARLAAWIKQS</sequence>
<gene>
    <name evidence="1" type="primary">menD</name>
    <name type="ordered locus">Shew_3599</name>
</gene>
<reference key="1">
    <citation type="submission" date="2007-03" db="EMBL/GenBank/DDBJ databases">
        <title>Complete sequence of Shewanella loihica PV-4.</title>
        <authorList>
            <consortium name="US DOE Joint Genome Institute"/>
            <person name="Copeland A."/>
            <person name="Lucas S."/>
            <person name="Lapidus A."/>
            <person name="Barry K."/>
            <person name="Detter J.C."/>
            <person name="Glavina del Rio T."/>
            <person name="Hammon N."/>
            <person name="Israni S."/>
            <person name="Dalin E."/>
            <person name="Tice H."/>
            <person name="Pitluck S."/>
            <person name="Chain P."/>
            <person name="Malfatti S."/>
            <person name="Shin M."/>
            <person name="Vergez L."/>
            <person name="Schmutz J."/>
            <person name="Larimer F."/>
            <person name="Land M."/>
            <person name="Hauser L."/>
            <person name="Kyrpides N."/>
            <person name="Mikhailova N."/>
            <person name="Romine M.F."/>
            <person name="Serres G."/>
            <person name="Fredrickson J."/>
            <person name="Tiedje J."/>
            <person name="Richardson P."/>
        </authorList>
    </citation>
    <scope>NUCLEOTIDE SEQUENCE [LARGE SCALE GENOMIC DNA]</scope>
    <source>
        <strain>ATCC BAA-1088 / PV-4</strain>
    </source>
</reference>
<dbReference type="EC" id="2.2.1.9" evidence="1"/>
<dbReference type="EMBL" id="CP000606">
    <property type="protein sequence ID" value="ABO25465.1"/>
    <property type="molecule type" value="Genomic_DNA"/>
</dbReference>
<dbReference type="RefSeq" id="WP_011867393.1">
    <property type="nucleotide sequence ID" value="NC_009092.1"/>
</dbReference>
<dbReference type="SMR" id="A3QJ17"/>
<dbReference type="STRING" id="323850.Shew_3599"/>
<dbReference type="KEGG" id="slo:Shew_3599"/>
<dbReference type="eggNOG" id="COG1165">
    <property type="taxonomic scope" value="Bacteria"/>
</dbReference>
<dbReference type="HOGENOM" id="CLU_006051_3_0_6"/>
<dbReference type="OrthoDB" id="9791859at2"/>
<dbReference type="UniPathway" id="UPA00079"/>
<dbReference type="UniPathway" id="UPA01057">
    <property type="reaction ID" value="UER00164"/>
</dbReference>
<dbReference type="Proteomes" id="UP000001558">
    <property type="component" value="Chromosome"/>
</dbReference>
<dbReference type="GO" id="GO:0070204">
    <property type="term" value="F:2-succinyl-5-enolpyruvyl-6-hydroxy-3-cyclohexene-1-carboxylic-acid synthase activity"/>
    <property type="evidence" value="ECO:0007669"/>
    <property type="project" value="UniProtKB-UniRule"/>
</dbReference>
<dbReference type="GO" id="GO:0000287">
    <property type="term" value="F:magnesium ion binding"/>
    <property type="evidence" value="ECO:0007669"/>
    <property type="project" value="UniProtKB-UniRule"/>
</dbReference>
<dbReference type="GO" id="GO:0030145">
    <property type="term" value="F:manganese ion binding"/>
    <property type="evidence" value="ECO:0007669"/>
    <property type="project" value="UniProtKB-UniRule"/>
</dbReference>
<dbReference type="GO" id="GO:0030976">
    <property type="term" value="F:thiamine pyrophosphate binding"/>
    <property type="evidence" value="ECO:0007669"/>
    <property type="project" value="UniProtKB-UniRule"/>
</dbReference>
<dbReference type="GO" id="GO:0009234">
    <property type="term" value="P:menaquinone biosynthetic process"/>
    <property type="evidence" value="ECO:0007669"/>
    <property type="project" value="UniProtKB-UniRule"/>
</dbReference>
<dbReference type="CDD" id="cd07037">
    <property type="entry name" value="TPP_PYR_MenD"/>
    <property type="match status" value="1"/>
</dbReference>
<dbReference type="CDD" id="cd02009">
    <property type="entry name" value="TPP_SHCHC_synthase"/>
    <property type="match status" value="1"/>
</dbReference>
<dbReference type="Gene3D" id="3.40.50.970">
    <property type="match status" value="2"/>
</dbReference>
<dbReference type="Gene3D" id="3.40.50.1220">
    <property type="entry name" value="TPP-binding domain"/>
    <property type="match status" value="1"/>
</dbReference>
<dbReference type="HAMAP" id="MF_01659">
    <property type="entry name" value="MenD"/>
    <property type="match status" value="1"/>
</dbReference>
<dbReference type="InterPro" id="IPR029035">
    <property type="entry name" value="DHS-like_NAD/FAD-binding_dom"/>
</dbReference>
<dbReference type="InterPro" id="IPR004433">
    <property type="entry name" value="MenaQ_synth_MenD"/>
</dbReference>
<dbReference type="InterPro" id="IPR032264">
    <property type="entry name" value="MenD_middle"/>
</dbReference>
<dbReference type="InterPro" id="IPR029061">
    <property type="entry name" value="THDP-binding"/>
</dbReference>
<dbReference type="InterPro" id="IPR012001">
    <property type="entry name" value="Thiamin_PyroP_enz_TPP-bd_dom"/>
</dbReference>
<dbReference type="InterPro" id="IPR011766">
    <property type="entry name" value="TPP_enzyme_TPP-bd"/>
</dbReference>
<dbReference type="NCBIfam" id="TIGR00173">
    <property type="entry name" value="menD"/>
    <property type="match status" value="1"/>
</dbReference>
<dbReference type="PANTHER" id="PTHR42916">
    <property type="entry name" value="2-SUCCINYL-5-ENOLPYRUVYL-6-HYDROXY-3-CYCLOHEXENE-1-CARBOXYLATE SYNTHASE"/>
    <property type="match status" value="1"/>
</dbReference>
<dbReference type="PANTHER" id="PTHR42916:SF1">
    <property type="entry name" value="PROTEIN PHYLLO, CHLOROPLASTIC"/>
    <property type="match status" value="1"/>
</dbReference>
<dbReference type="Pfam" id="PF02775">
    <property type="entry name" value="TPP_enzyme_C"/>
    <property type="match status" value="1"/>
</dbReference>
<dbReference type="Pfam" id="PF16582">
    <property type="entry name" value="TPP_enzyme_M_2"/>
    <property type="match status" value="1"/>
</dbReference>
<dbReference type="Pfam" id="PF02776">
    <property type="entry name" value="TPP_enzyme_N"/>
    <property type="match status" value="1"/>
</dbReference>
<dbReference type="PIRSF" id="PIRSF004983">
    <property type="entry name" value="MenD"/>
    <property type="match status" value="1"/>
</dbReference>
<dbReference type="SUPFAM" id="SSF52467">
    <property type="entry name" value="DHS-like NAD/FAD-binding domain"/>
    <property type="match status" value="1"/>
</dbReference>
<dbReference type="SUPFAM" id="SSF52518">
    <property type="entry name" value="Thiamin diphosphate-binding fold (THDP-binding)"/>
    <property type="match status" value="2"/>
</dbReference>
<proteinExistence type="inferred from homology"/>
<feature type="chain" id="PRO_0000341833" description="2-succinyl-5-enolpyruvyl-6-hydroxy-3-cyclohexene-1-carboxylate synthase">
    <location>
        <begin position="1"/>
        <end position="567"/>
    </location>
</feature>
<name>MEND_SHELP</name>
<accession>A3QJ17</accession>
<protein>
    <recommendedName>
        <fullName evidence="1">2-succinyl-5-enolpyruvyl-6-hydroxy-3-cyclohexene-1-carboxylate synthase</fullName>
        <shortName evidence="1">SEPHCHC synthase</shortName>
        <ecNumber evidence="1">2.2.1.9</ecNumber>
    </recommendedName>
    <alternativeName>
        <fullName evidence="1">Menaquinone biosynthesis protein MenD</fullName>
    </alternativeName>
</protein>
<comment type="function">
    <text evidence="1">Catalyzes the thiamine diphosphate-dependent decarboxylation of 2-oxoglutarate and the subsequent addition of the resulting succinic semialdehyde-thiamine pyrophosphate anion to isochorismate to yield 2-succinyl-5-enolpyruvyl-6-hydroxy-3-cyclohexene-1-carboxylate (SEPHCHC).</text>
</comment>
<comment type="catalytic activity">
    <reaction evidence="1">
        <text>isochorismate + 2-oxoglutarate + H(+) = 5-enolpyruvoyl-6-hydroxy-2-succinyl-cyclohex-3-ene-1-carboxylate + CO2</text>
        <dbReference type="Rhea" id="RHEA:25593"/>
        <dbReference type="ChEBI" id="CHEBI:15378"/>
        <dbReference type="ChEBI" id="CHEBI:16526"/>
        <dbReference type="ChEBI" id="CHEBI:16810"/>
        <dbReference type="ChEBI" id="CHEBI:29780"/>
        <dbReference type="ChEBI" id="CHEBI:58818"/>
        <dbReference type="EC" id="2.2.1.9"/>
    </reaction>
</comment>
<comment type="cofactor">
    <cofactor evidence="1">
        <name>Mg(2+)</name>
        <dbReference type="ChEBI" id="CHEBI:18420"/>
    </cofactor>
    <cofactor evidence="1">
        <name>Mn(2+)</name>
        <dbReference type="ChEBI" id="CHEBI:29035"/>
    </cofactor>
</comment>
<comment type="cofactor">
    <cofactor evidence="1">
        <name>thiamine diphosphate</name>
        <dbReference type="ChEBI" id="CHEBI:58937"/>
    </cofactor>
    <text evidence="1">Binds 1 thiamine pyrophosphate per subunit.</text>
</comment>
<comment type="pathway">
    <text evidence="1">Quinol/quinone metabolism; 1,4-dihydroxy-2-naphthoate biosynthesis; 1,4-dihydroxy-2-naphthoate from chorismate: step 2/7.</text>
</comment>
<comment type="pathway">
    <text evidence="1">Quinol/quinone metabolism; menaquinone biosynthesis.</text>
</comment>
<comment type="subunit">
    <text evidence="1">Homodimer.</text>
</comment>
<comment type="similarity">
    <text evidence="1">Belongs to the TPP enzyme family. MenD subfamily.</text>
</comment>
<evidence type="ECO:0000255" key="1">
    <source>
        <dbReference type="HAMAP-Rule" id="MF_01659"/>
    </source>
</evidence>
<organism>
    <name type="scientific">Shewanella loihica (strain ATCC BAA-1088 / PV-4)</name>
    <dbReference type="NCBI Taxonomy" id="323850"/>
    <lineage>
        <taxon>Bacteria</taxon>
        <taxon>Pseudomonadati</taxon>
        <taxon>Pseudomonadota</taxon>
        <taxon>Gammaproteobacteria</taxon>
        <taxon>Alteromonadales</taxon>
        <taxon>Shewanellaceae</taxon>
        <taxon>Shewanella</taxon>
    </lineage>
</organism>